<accession>Q04LE4</accession>
<keyword id="KW-0002">3D-structure</keyword>
<keyword id="KW-0131">Cell cycle</keyword>
<keyword id="KW-0132">Cell division</keyword>
<keyword id="KW-1003">Cell membrane</keyword>
<keyword id="KW-0472">Membrane</keyword>
<keyword id="KW-1185">Reference proteome</keyword>
<keyword id="KW-0812">Transmembrane</keyword>
<keyword id="KW-1133">Transmembrane helix</keyword>
<evidence type="ECO:0000250" key="1">
    <source>
        <dbReference type="UniProtKB" id="O34876"/>
    </source>
</evidence>
<evidence type="ECO:0000255" key="2"/>
<evidence type="ECO:0000269" key="3">
    <source>
    </source>
</evidence>
<evidence type="ECO:0000269" key="4">
    <source>
    </source>
</evidence>
<evidence type="ECO:0000269" key="5">
    <source>
    </source>
</evidence>
<evidence type="ECO:0000303" key="6">
    <source>
    </source>
</evidence>
<evidence type="ECO:0000305" key="7"/>
<evidence type="ECO:0000312" key="8">
    <source>
        <dbReference type="EMBL" id="ABJ54921.1"/>
    </source>
</evidence>
<evidence type="ECO:0007744" key="9">
    <source>
        <dbReference type="PDB" id="6HE6"/>
    </source>
</evidence>
<evidence type="ECO:0007744" key="10">
    <source>
        <dbReference type="PDB" id="6HEE"/>
    </source>
</evidence>
<evidence type="ECO:0007744" key="11">
    <source>
        <dbReference type="PDB" id="6HFX"/>
    </source>
</evidence>
<evidence type="ECO:0007744" key="12">
    <source>
        <dbReference type="PDB" id="6MK7"/>
    </source>
</evidence>
<evidence type="ECO:0007829" key="13">
    <source>
        <dbReference type="PDB" id="6HE6"/>
    </source>
</evidence>
<reference evidence="8" key="1">
    <citation type="journal article" date="2007" name="J. Bacteriol.">
        <title>Genome sequence of Avery's virulent serotype 2 strain D39 of Streptococcus pneumoniae and comparison with that of unencapsulated laboratory strain R6.</title>
        <authorList>
            <person name="Lanie J.A."/>
            <person name="Ng W.-L."/>
            <person name="Kazmierczak K.M."/>
            <person name="Andrzejewski T.M."/>
            <person name="Davidsen T.M."/>
            <person name="Wayne K.J."/>
            <person name="Tettelin H."/>
            <person name="Glass J.I."/>
            <person name="Winkler M.E."/>
        </authorList>
    </citation>
    <scope>NUCLEOTIDE SEQUENCE [LARGE SCALE GENOMIC DNA]</scope>
    <source>
        <strain>D39 / NCTC 7466</strain>
    </source>
</reference>
<reference evidence="7" key="2">
    <citation type="journal article" date="2011" name="Proc. Natl. Acad. Sci. U.S.A.">
        <title>Essential PcsB putative peptidoglycan hydrolase interacts with the essential FtsXSpn cell division protein in Streptococcus pneumoniae D39.</title>
        <authorList>
            <person name="Sham L.T."/>
            <person name="Barendt S.M."/>
            <person name="Kopecky K.E."/>
            <person name="Winkler M.E."/>
        </authorList>
    </citation>
    <scope>INTERACTION WITH FTSE AND PCSB</scope>
    <scope>SUBCELLULAR LOCATION</scope>
    <scope>IDENTIFICATION BY MASS SPECTROMETRY</scope>
    <scope>DISRUPTION PHENOTYPE</scope>
</reference>
<reference evidence="7" key="3">
    <citation type="journal article" date="2016" name="MicrobiologyOpen">
        <title>Biochemical characterization of essential cell division proteins FtsX and FtsE that mediate peptidoglycan hydrolysis by PcsB in Streptococcus pneumoniae.</title>
        <authorList>
            <person name="Bajaj R."/>
            <person name="Bruce K.E."/>
            <person name="Davidson A.L."/>
            <person name="Rued B.E."/>
            <person name="Stauffacher C.V."/>
            <person name="Winkler M.E."/>
        </authorList>
    </citation>
    <scope>SUBUNIT</scope>
</reference>
<reference evidence="9 10 11 12" key="4">
    <citation type="journal article" date="2019" name="MBio">
        <title>Structure of the Large Extracellular Loop of FtsX and Its Interaction with the Essential Peptidoglycan Hydrolase PcsB in Streptococcus pneumoniae.</title>
        <authorList>
            <person name="Rued B.E."/>
            <person name="Alcorlo M."/>
            <person name="Edmonds K.A."/>
            <person name="Martinez-Caballero S."/>
            <person name="Straume D."/>
            <person name="Fu Y."/>
            <person name="Bruce K.E."/>
            <person name="Wu H."/>
            <person name="Havarstein L.S."/>
            <person name="Hermoso J.A."/>
            <person name="Winkler M.E."/>
            <person name="Giedroc D.P."/>
        </authorList>
    </citation>
    <scope>STRUCTURE BY NMR OF 47-168</scope>
    <scope>X-RAY CRYSTALLOGRAPHY (2.0 ANGSTROMS) OF 49-165</scope>
    <scope>FUNCTION</scope>
    <scope>INTERACTION WITH PCSB</scope>
    <scope>MUTAGENESIS OF 109-GLU--ASN-131; 109-GLU--MET-119; GLU-109; 111-GLN--LEU-115; GLN-111; 115-LEU--MET-119; LEU-115; MET-119; 123-TRP--ASN-131; TRP-123; PHE-126 AND ASN-131</scope>
</reference>
<gene>
    <name evidence="6" type="primary">ftsX</name>
    <name type="ordered locus">SPD_0660</name>
</gene>
<protein>
    <recommendedName>
        <fullName evidence="6">Cell division protein FtsX</fullName>
    </recommendedName>
</protein>
<feature type="chain" id="PRO_0000421664" description="Cell division protein FtsX">
    <location>
        <begin position="1"/>
        <end position="308"/>
    </location>
</feature>
<feature type="topological domain" description="Cytoplasmic" evidence="2">
    <location>
        <begin position="1"/>
        <end position="24"/>
    </location>
</feature>
<feature type="transmembrane region" description="Helical" evidence="2">
    <location>
        <begin position="25"/>
        <end position="45"/>
    </location>
</feature>
<feature type="topological domain" description="Extracellular" evidence="2">
    <location>
        <begin position="46"/>
        <end position="178"/>
    </location>
</feature>
<feature type="transmembrane region" description="Helical" evidence="2">
    <location>
        <begin position="179"/>
        <end position="199"/>
    </location>
</feature>
<feature type="topological domain" description="Cytoplasmic" evidence="2">
    <location>
        <begin position="200"/>
        <end position="236"/>
    </location>
</feature>
<feature type="transmembrane region" description="Helical" evidence="2">
    <location>
        <begin position="237"/>
        <end position="257"/>
    </location>
</feature>
<feature type="topological domain" description="Extracellular" evidence="2">
    <location>
        <begin position="258"/>
        <end position="276"/>
    </location>
</feature>
<feature type="transmembrane region" description="Helical" evidence="2">
    <location>
        <begin position="277"/>
        <end position="297"/>
    </location>
</feature>
<feature type="topological domain" description="Cytoplasmic" evidence="2">
    <location>
        <begin position="298"/>
        <end position="308"/>
    </location>
</feature>
<feature type="mutagenesis site" description="Shape defects; cells are significantly shorter and rounder." evidence="5">
    <original>EEQYEKLTEIMGDNWKIFEGDAN</original>
    <variation>AEQYEKLTEIMGDNWKIFEGDAA</variation>
    <location>
        <begin position="109"/>
        <end position="131"/>
    </location>
</feature>
<feature type="mutagenesis site" description="Defects in shape and growth; cells are significantly shorter and rounder." evidence="5">
    <original>EEQYEKLTEIM</original>
    <variation>AEAYEKATEIA</variation>
    <location>
        <begin position="109"/>
        <end position="119"/>
    </location>
</feature>
<feature type="mutagenesis site" description="Shape defects; cells are significantly shorter and rounder." evidence="5">
    <original>E</original>
    <variation>A</variation>
    <location>
        <position position="109"/>
    </location>
</feature>
<feature type="mutagenesis site" description="Shape defects; cells are significantly shorter and rounder." evidence="5">
    <original>QYEKL</original>
    <variation>AYEKC</variation>
    <location>
        <begin position="111"/>
        <end position="115"/>
    </location>
</feature>
<feature type="mutagenesis site" description="No shape or growth defects." evidence="5">
    <original>Q</original>
    <variation>A</variation>
    <location>
        <position position="111"/>
    </location>
</feature>
<feature type="mutagenesis site" description="Protein folds stably, but disrupts binding to PcsB. Defects in shape and growth; cells are significantly shorter and rounder." evidence="5">
    <original>LTEIM</original>
    <variation>ATEIA</variation>
    <location>
        <begin position="115"/>
        <end position="119"/>
    </location>
</feature>
<feature type="mutagenesis site" description="Shape defects; cells are significantly shorter and rounder." evidence="5">
    <original>L</original>
    <variation>A</variation>
    <location>
        <position position="115"/>
    </location>
</feature>
<feature type="mutagenesis site" description="Shape defects; cells are significantly shorter and rounder." evidence="5">
    <original>M</original>
    <variation>A</variation>
    <location>
        <position position="119"/>
    </location>
</feature>
<feature type="mutagenesis site" description="Defects in shape and growth; cells are significantly shorter and rounder." evidence="5">
    <original>WKIFEGDAN</original>
    <variation>AKIAEGDAA</variation>
    <location>
        <begin position="123"/>
        <end position="131"/>
    </location>
</feature>
<feature type="mutagenesis site" description="Shape defects; cells are significantly shorter and rounder." evidence="5">
    <original>W</original>
    <variation>A</variation>
    <location>
        <position position="123"/>
    </location>
</feature>
<feature type="mutagenesis site" description="Shape defects; cells are significantly shorter and rounder." evidence="5">
    <original>F</original>
    <variation>A</variation>
    <location>
        <position position="126"/>
    </location>
</feature>
<feature type="mutagenesis site" description="Shape defects; cells are significantly shorter and rounder." evidence="5">
    <original>N</original>
    <variation>A</variation>
    <variation>D</variation>
    <location>
        <position position="131"/>
    </location>
</feature>
<feature type="helix" evidence="13">
    <location>
        <begin position="56"/>
        <end position="58"/>
    </location>
</feature>
<feature type="strand" evidence="13">
    <location>
        <begin position="59"/>
        <end position="64"/>
    </location>
</feature>
<feature type="strand" evidence="13">
    <location>
        <begin position="73"/>
        <end position="77"/>
    </location>
</feature>
<feature type="strand" evidence="13">
    <location>
        <begin position="80"/>
        <end position="83"/>
    </location>
</feature>
<feature type="turn" evidence="13">
    <location>
        <begin position="85"/>
        <end position="88"/>
    </location>
</feature>
<feature type="helix" evidence="13">
    <location>
        <begin position="89"/>
        <end position="95"/>
    </location>
</feature>
<feature type="strand" evidence="13">
    <location>
        <begin position="100"/>
        <end position="106"/>
    </location>
</feature>
<feature type="helix" evidence="13">
    <location>
        <begin position="108"/>
        <end position="118"/>
    </location>
</feature>
<feature type="strand" evidence="13">
    <location>
        <begin position="119"/>
        <end position="121"/>
    </location>
</feature>
<feature type="helix" evidence="13">
    <location>
        <begin position="124"/>
        <end position="126"/>
    </location>
</feature>
<feature type="strand" evidence="13">
    <location>
        <begin position="136"/>
        <end position="143"/>
    </location>
</feature>
<feature type="helix" evidence="13">
    <location>
        <begin position="144"/>
        <end position="146"/>
    </location>
</feature>
<feature type="helix" evidence="13">
    <location>
        <begin position="147"/>
        <end position="155"/>
    </location>
</feature>
<feature type="strand" evidence="13">
    <location>
        <begin position="160"/>
        <end position="164"/>
    </location>
</feature>
<organism>
    <name type="scientific">Streptococcus pneumoniae serotype 2 (strain D39 / NCTC 7466)</name>
    <dbReference type="NCBI Taxonomy" id="373153"/>
    <lineage>
        <taxon>Bacteria</taxon>
        <taxon>Bacillati</taxon>
        <taxon>Bacillota</taxon>
        <taxon>Bacilli</taxon>
        <taxon>Lactobacillales</taxon>
        <taxon>Streptococcaceae</taxon>
        <taxon>Streptococcus</taxon>
    </lineage>
</organism>
<proteinExistence type="evidence at protein level"/>
<sequence length="308" mass="34270">MISRFFRHLFEALKSLKRNGWMTVAAVSSVMITLTLVAIFASVIFNTAKLATDIENNVRVVVYIRKDVEDNSQTIEKEGQTVTNNDYHKVYDSLKNMSTVKSVTFSSKEEQYEKLTEIMGDNWKIFEGDANPLYDAYIVEANAPNDVKTIAEDAKKIEGVSEVQDGGANTERLFKLASFIRVWGLGIAALLIFIAVFLISNTIRITIISRSREIQIMRLVGAKNSYIRGPFLLEGAFIGLLGAIAPSVLVFIVYQIVYQSVNKSLVGQNLSMISPDLFSPLMIALLFVIGVFIGSLGSGISMRRFLKI</sequence>
<name>FTSX_STRP2</name>
<comment type="function">
    <text evidence="1 5">Part of the ABC transporter FtsEX involved in asymmetric cellular division facilitating the initiation of sporulation (By similarity). Required in maintaining normal growth and cellular morphology (PubMed:30696736).</text>
</comment>
<comment type="subunit">
    <text evidence="3 4 5">Homodimer (PubMed:27167971). Interacts with FtsE; forms a membrane-associated complex (PubMed:22006325). Interacts (via large extracellular loop) with PcsB (via N-terminal coiled-coil domain) (PubMed:22006325, PubMed:30696736). This interaction directs PcsB to equatorial and septal sites of dividing cells (PubMed:22006325).</text>
</comment>
<comment type="subcellular location">
    <subcellularLocation>
        <location evidence="3">Cell membrane</location>
        <topology evidence="2 3">Multi-pass membrane protein</topology>
    </subcellularLocation>
</comment>
<comment type="disruption phenotype">
    <text evidence="3">Essential; cannot be deleted.</text>
</comment>
<comment type="similarity">
    <text evidence="2">Belongs to the ABC-4 integral membrane protein family. FtsX subfamily.</text>
</comment>
<dbReference type="EMBL" id="CP000410">
    <property type="protein sequence ID" value="ABJ54921.1"/>
    <property type="molecule type" value="Genomic_DNA"/>
</dbReference>
<dbReference type="RefSeq" id="WP_000625533.1">
    <property type="nucleotide sequence ID" value="NZ_JAMLJR010000001.1"/>
</dbReference>
<dbReference type="PDB" id="6HE6">
    <property type="method" value="X-ray"/>
    <property type="resolution" value="2.00 A"/>
    <property type="chains" value="A/B=49-165"/>
</dbReference>
<dbReference type="PDB" id="6HEE">
    <property type="method" value="X-ray"/>
    <property type="resolution" value="2.30 A"/>
    <property type="chains" value="A/B=49-165"/>
</dbReference>
<dbReference type="PDB" id="6HFX">
    <property type="method" value="X-ray"/>
    <property type="resolution" value="2.16 A"/>
    <property type="chains" value="A/B=52-165"/>
</dbReference>
<dbReference type="PDB" id="6MK7">
    <property type="method" value="NMR"/>
    <property type="chains" value="A=47-168"/>
</dbReference>
<dbReference type="PDBsum" id="6HE6"/>
<dbReference type="PDBsum" id="6HEE"/>
<dbReference type="PDBsum" id="6HFX"/>
<dbReference type="PDBsum" id="6MK7"/>
<dbReference type="BMRB" id="Q04LE4"/>
<dbReference type="SMR" id="Q04LE4"/>
<dbReference type="PaxDb" id="373153-SPD_0660"/>
<dbReference type="KEGG" id="spd:SPD_0660"/>
<dbReference type="eggNOG" id="COG2177">
    <property type="taxonomic scope" value="Bacteria"/>
</dbReference>
<dbReference type="HOGENOM" id="CLU_073546_2_2_9"/>
<dbReference type="BioCyc" id="SPNE373153:G1G6V-726-MONOMER"/>
<dbReference type="Proteomes" id="UP000001452">
    <property type="component" value="Chromosome"/>
</dbReference>
<dbReference type="GO" id="GO:0005886">
    <property type="term" value="C:plasma membrane"/>
    <property type="evidence" value="ECO:0007669"/>
    <property type="project" value="UniProtKB-SubCell"/>
</dbReference>
<dbReference type="GO" id="GO:0051301">
    <property type="term" value="P:cell division"/>
    <property type="evidence" value="ECO:0007669"/>
    <property type="project" value="UniProtKB-KW"/>
</dbReference>
<dbReference type="Gene3D" id="3.30.70.3040">
    <property type="match status" value="1"/>
</dbReference>
<dbReference type="InterPro" id="IPR003838">
    <property type="entry name" value="ABC3_permease_C"/>
</dbReference>
<dbReference type="InterPro" id="IPR004513">
    <property type="entry name" value="FtsX"/>
</dbReference>
<dbReference type="InterPro" id="IPR040690">
    <property type="entry name" value="FtsX_ECD"/>
</dbReference>
<dbReference type="NCBIfam" id="NF038347">
    <property type="entry name" value="FtsX_Gpos"/>
    <property type="match status" value="1"/>
</dbReference>
<dbReference type="PANTHER" id="PTHR47755">
    <property type="entry name" value="CELL DIVISION PROTEIN FTSX"/>
    <property type="match status" value="1"/>
</dbReference>
<dbReference type="PANTHER" id="PTHR47755:SF1">
    <property type="entry name" value="CELL DIVISION PROTEIN FTSX"/>
    <property type="match status" value="1"/>
</dbReference>
<dbReference type="Pfam" id="PF02687">
    <property type="entry name" value="FtsX"/>
    <property type="match status" value="1"/>
</dbReference>
<dbReference type="Pfam" id="PF18075">
    <property type="entry name" value="FtsX_ECD"/>
    <property type="match status" value="1"/>
</dbReference>
<dbReference type="PIRSF" id="PIRSF003097">
    <property type="entry name" value="FtsX"/>
    <property type="match status" value="1"/>
</dbReference>